<comment type="function">
    <text evidence="7">Aerial growth, conidiation, and dispersal of filamentous fungi in the environment rely upon a capability of their secreting small amphipathic proteins called hydrophobins (HPBs) with low sequence identity. Class I can self-assemble into an outermost layer of rodlet bundles on aerial cell surfaces, conferring cellular hydrophobicity that supports fungal growth, development and dispersal; whereas Class II form highly ordered films at water-air interfaces through intermolecular interactions but contribute nothing to the rodlet structure.</text>
</comment>
<comment type="subunit">
    <text evidence="1">Self-assembles to form functional amyloid fibrils called rodlets. Self-assembly into fibrillar rodlets occurs spontaneously at hydrophobic:hydrophilic interfaces and the rodlets further associate laterally to form amphipathic monolayers.</text>
</comment>
<comment type="subcellular location">
    <subcellularLocation>
        <location evidence="1">Secreted</location>
    </subcellularLocation>
    <subcellularLocation>
        <location evidence="1">Secreted</location>
        <location evidence="1">Cell wall</location>
    </subcellularLocation>
</comment>
<comment type="developmental stage">
    <text evidence="3">Expressed in fruiting bodies.</text>
</comment>
<comment type="similarity">
    <text evidence="7">Belongs to the fungal hydrophobin family.</text>
</comment>
<sequence length="115" mass="11471">MFSRVLVAALVALPVLVSASPTPGGYPDSTTVVSQCNVGELHCCNTQQTPDHTNAAGGLLGAAANVGALLGFDCTPISVIGIGGNNCAAQPVCCEANEFTGLINALSCSPINVNL</sequence>
<keyword id="KW-0134">Cell wall</keyword>
<keyword id="KW-1015">Disulfide bond</keyword>
<keyword id="KW-0964">Secreted</keyword>
<keyword id="KW-0732">Signal</keyword>
<gene>
    <name evidence="5" type="primary">hypC</name>
    <name evidence="4" type="synonym">abh1</name>
    <name evidence="6" type="synonym">abh2</name>
</gene>
<reference key="1">
    <citation type="journal article" date="1996" name="J. Mol. Biol.">
        <title>The Agaricus bisporus hypA gene encodes a hydrophobin and specifically accumulates in peel tissue of mushroom caps during fruit body development.</title>
        <authorList>
            <person name="de Groot P.W.J."/>
            <person name="Schaap P.J."/>
            <person name="Visser J."/>
            <person name="van Griensven L.J.L.D."/>
        </authorList>
    </citation>
    <scope>NUCLEOTIDE SEQUENCE [GENOMIC DNA]</scope>
    <scope>DEVELOPMENTAL STAGE</scope>
    <source>
        <strain>Horst H39</strain>
    </source>
</reference>
<reference key="2">
    <citation type="journal article" date="1996" name="Microbiology">
        <title>An abundant hydrophobin (ABH1) forms hydrophobic rodlet layers in Agaricus bisporus fruiting bodies.</title>
        <authorList>
            <person name="Lugones L.G."/>
            <person name="Bosscher J.S."/>
            <person name="Scholtmeyer K."/>
            <person name="de Vries O.M.H."/>
            <person name="Wessels J.G.H."/>
        </authorList>
    </citation>
    <scope>NUCLEOTIDE SEQUENCE [GENOMIC DNA]</scope>
    <source>
        <strain>Horst U3</strain>
    </source>
</reference>
<reference key="3">
    <citation type="journal article" date="2025" name="Biochim. Biophys. Acta">
        <title>Assembly of Hydrophobin class I from Agaricus bisporus produced different amyloid-like fibrils.</title>
        <authorList>
            <person name="Rojas-Osnaya J."/>
            <person name="Najera H."/>
        </authorList>
    </citation>
    <scope>IDENTIFICATION</scope>
</reference>
<dbReference type="EMBL" id="X90818">
    <property type="protein sequence ID" value="CAA62332.1"/>
    <property type="molecule type" value="Genomic_DNA"/>
</dbReference>
<dbReference type="EMBL" id="X92860">
    <property type="protein sequence ID" value="CAA63446.1"/>
    <property type="molecule type" value="Genomic_DNA"/>
</dbReference>
<dbReference type="PIR" id="S68585">
    <property type="entry name" value="S68585"/>
</dbReference>
<dbReference type="SMR" id="P49073"/>
<dbReference type="GO" id="GO:0005576">
    <property type="term" value="C:extracellular region"/>
    <property type="evidence" value="ECO:0007669"/>
    <property type="project" value="UniProtKB-KW"/>
</dbReference>
<dbReference type="GO" id="GO:0009277">
    <property type="term" value="C:fungal-type cell wall"/>
    <property type="evidence" value="ECO:0007669"/>
    <property type="project" value="InterPro"/>
</dbReference>
<dbReference type="GO" id="GO:0005199">
    <property type="term" value="F:structural constituent of cell wall"/>
    <property type="evidence" value="ECO:0007669"/>
    <property type="project" value="InterPro"/>
</dbReference>
<dbReference type="CDD" id="cd23507">
    <property type="entry name" value="hydrophobin_I"/>
    <property type="match status" value="1"/>
</dbReference>
<dbReference type="InterPro" id="IPR001338">
    <property type="entry name" value="Hydrophobin"/>
</dbReference>
<dbReference type="InterPro" id="IPR019778">
    <property type="entry name" value="Hydrophobin_CS"/>
</dbReference>
<dbReference type="Pfam" id="PF01185">
    <property type="entry name" value="Hydrophobin"/>
    <property type="match status" value="1"/>
</dbReference>
<dbReference type="SMART" id="SM00075">
    <property type="entry name" value="HYDRO"/>
    <property type="match status" value="1"/>
</dbReference>
<dbReference type="PROSITE" id="PS00956">
    <property type="entry name" value="HYDROPHOBIN"/>
    <property type="match status" value="1"/>
</dbReference>
<organism>
    <name type="scientific">Agaricus bisporus</name>
    <name type="common">White button mushroom</name>
    <dbReference type="NCBI Taxonomy" id="5341"/>
    <lineage>
        <taxon>Eukaryota</taxon>
        <taxon>Fungi</taxon>
        <taxon>Dikarya</taxon>
        <taxon>Basidiomycota</taxon>
        <taxon>Agaricomycotina</taxon>
        <taxon>Agaricomycetes</taxon>
        <taxon>Agaricomycetidae</taxon>
        <taxon>Agaricales</taxon>
        <taxon>Agaricineae</taxon>
        <taxon>Agaricaceae</taxon>
        <taxon>Agaricus</taxon>
    </lineage>
</organism>
<protein>
    <recommendedName>
        <fullName evidence="5">Class I hydrophobin C</fullName>
    </recommendedName>
</protein>
<name>HYPC_AGABI</name>
<feature type="signal peptide" evidence="2">
    <location>
        <begin position="1"/>
        <end position="19"/>
    </location>
</feature>
<feature type="chain" id="PRO_0000013501" description="Class I hydrophobin C">
    <location>
        <begin position="20"/>
        <end position="115"/>
    </location>
</feature>
<feature type="disulfide bond" evidence="1">
    <location>
        <begin position="36"/>
        <end position="93"/>
    </location>
</feature>
<feature type="disulfide bond" evidence="1">
    <location>
        <begin position="43"/>
        <end position="87"/>
    </location>
</feature>
<feature type="disulfide bond" evidence="1">
    <location>
        <begin position="44"/>
        <end position="74"/>
    </location>
</feature>
<feature type="disulfide bond" evidence="1">
    <location>
        <begin position="94"/>
        <end position="108"/>
    </location>
</feature>
<feature type="sequence conflict" description="In Ref. 2; CAA63446." evidence="7" ref="2">
    <location>
        <begin position="97"/>
        <end position="108"/>
    </location>
</feature>
<accession>P49073</accession>
<evidence type="ECO:0000250" key="1">
    <source>
        <dbReference type="UniProtKB" id="Q04571"/>
    </source>
</evidence>
<evidence type="ECO:0000255" key="2"/>
<evidence type="ECO:0000269" key="3">
    <source>
    </source>
</evidence>
<evidence type="ECO:0000303" key="4">
    <source>
    </source>
</evidence>
<evidence type="ECO:0000303" key="5">
    <source>
    </source>
</evidence>
<evidence type="ECO:0000303" key="6">
    <source>
    </source>
</evidence>
<evidence type="ECO:0000305" key="7"/>
<proteinExistence type="evidence at transcript level"/>